<gene>
    <name evidence="1" type="primary">rpsH</name>
    <name type="ordered locus">LACR_2387</name>
</gene>
<feature type="chain" id="PRO_0000290861" description="Small ribosomal subunit protein uS8">
    <location>
        <begin position="1"/>
        <end position="132"/>
    </location>
</feature>
<reference key="1">
    <citation type="journal article" date="2006" name="Proc. Natl. Acad. Sci. U.S.A.">
        <title>Comparative genomics of the lactic acid bacteria.</title>
        <authorList>
            <person name="Makarova K.S."/>
            <person name="Slesarev A."/>
            <person name="Wolf Y.I."/>
            <person name="Sorokin A."/>
            <person name="Mirkin B."/>
            <person name="Koonin E.V."/>
            <person name="Pavlov A."/>
            <person name="Pavlova N."/>
            <person name="Karamychev V."/>
            <person name="Polouchine N."/>
            <person name="Shakhova V."/>
            <person name="Grigoriev I."/>
            <person name="Lou Y."/>
            <person name="Rohksar D."/>
            <person name="Lucas S."/>
            <person name="Huang K."/>
            <person name="Goodstein D.M."/>
            <person name="Hawkins T."/>
            <person name="Plengvidhya V."/>
            <person name="Welker D."/>
            <person name="Hughes J."/>
            <person name="Goh Y."/>
            <person name="Benson A."/>
            <person name="Baldwin K."/>
            <person name="Lee J.-H."/>
            <person name="Diaz-Muniz I."/>
            <person name="Dosti B."/>
            <person name="Smeianov V."/>
            <person name="Wechter W."/>
            <person name="Barabote R."/>
            <person name="Lorca G."/>
            <person name="Altermann E."/>
            <person name="Barrangou R."/>
            <person name="Ganesan B."/>
            <person name="Xie Y."/>
            <person name="Rawsthorne H."/>
            <person name="Tamir D."/>
            <person name="Parker C."/>
            <person name="Breidt F."/>
            <person name="Broadbent J.R."/>
            <person name="Hutkins R."/>
            <person name="O'Sullivan D."/>
            <person name="Steele J."/>
            <person name="Unlu G."/>
            <person name="Saier M.H. Jr."/>
            <person name="Klaenhammer T."/>
            <person name="Richardson P."/>
            <person name="Kozyavkin S."/>
            <person name="Weimer B.C."/>
            <person name="Mills D.A."/>
        </authorList>
    </citation>
    <scope>NUCLEOTIDE SEQUENCE [LARGE SCALE GENOMIC DNA]</scope>
    <source>
        <strain>SK11</strain>
    </source>
</reference>
<proteinExistence type="inferred from homology"/>
<organism>
    <name type="scientific">Lactococcus lactis subsp. cremoris (strain SK11)</name>
    <dbReference type="NCBI Taxonomy" id="272622"/>
    <lineage>
        <taxon>Bacteria</taxon>
        <taxon>Bacillati</taxon>
        <taxon>Bacillota</taxon>
        <taxon>Bacilli</taxon>
        <taxon>Lactobacillales</taxon>
        <taxon>Streptococcaceae</taxon>
        <taxon>Lactococcus</taxon>
        <taxon>Lactococcus cremoris subsp. cremoris</taxon>
    </lineage>
</organism>
<protein>
    <recommendedName>
        <fullName evidence="1">Small ribosomal subunit protein uS8</fullName>
    </recommendedName>
    <alternativeName>
        <fullName evidence="2">30S ribosomal protein S8</fullName>
    </alternativeName>
</protein>
<dbReference type="EMBL" id="CP000425">
    <property type="protein sequence ID" value="ABJ73833.1"/>
    <property type="molecule type" value="Genomic_DNA"/>
</dbReference>
<dbReference type="RefSeq" id="WP_011677155.1">
    <property type="nucleotide sequence ID" value="NC_008527.1"/>
</dbReference>
<dbReference type="SMR" id="Q02W39"/>
<dbReference type="GeneID" id="61110412"/>
<dbReference type="KEGG" id="llc:LACR_2387"/>
<dbReference type="HOGENOM" id="CLU_098428_0_2_9"/>
<dbReference type="Proteomes" id="UP000000240">
    <property type="component" value="Chromosome"/>
</dbReference>
<dbReference type="GO" id="GO:1990904">
    <property type="term" value="C:ribonucleoprotein complex"/>
    <property type="evidence" value="ECO:0007669"/>
    <property type="project" value="UniProtKB-KW"/>
</dbReference>
<dbReference type="GO" id="GO:0005840">
    <property type="term" value="C:ribosome"/>
    <property type="evidence" value="ECO:0007669"/>
    <property type="project" value="UniProtKB-KW"/>
</dbReference>
<dbReference type="GO" id="GO:0019843">
    <property type="term" value="F:rRNA binding"/>
    <property type="evidence" value="ECO:0007669"/>
    <property type="project" value="UniProtKB-UniRule"/>
</dbReference>
<dbReference type="GO" id="GO:0003735">
    <property type="term" value="F:structural constituent of ribosome"/>
    <property type="evidence" value="ECO:0007669"/>
    <property type="project" value="InterPro"/>
</dbReference>
<dbReference type="GO" id="GO:0006412">
    <property type="term" value="P:translation"/>
    <property type="evidence" value="ECO:0007669"/>
    <property type="project" value="UniProtKB-UniRule"/>
</dbReference>
<dbReference type="FunFam" id="3.30.1370.30:FF:000002">
    <property type="entry name" value="30S ribosomal protein S8"/>
    <property type="match status" value="1"/>
</dbReference>
<dbReference type="FunFam" id="3.30.1490.10:FF:000001">
    <property type="entry name" value="30S ribosomal protein S8"/>
    <property type="match status" value="1"/>
</dbReference>
<dbReference type="Gene3D" id="3.30.1370.30">
    <property type="match status" value="1"/>
</dbReference>
<dbReference type="Gene3D" id="3.30.1490.10">
    <property type="match status" value="1"/>
</dbReference>
<dbReference type="HAMAP" id="MF_01302_B">
    <property type="entry name" value="Ribosomal_uS8_B"/>
    <property type="match status" value="1"/>
</dbReference>
<dbReference type="InterPro" id="IPR000630">
    <property type="entry name" value="Ribosomal_uS8"/>
</dbReference>
<dbReference type="InterPro" id="IPR047863">
    <property type="entry name" value="Ribosomal_uS8_CS"/>
</dbReference>
<dbReference type="InterPro" id="IPR035987">
    <property type="entry name" value="Ribosomal_uS8_sf"/>
</dbReference>
<dbReference type="NCBIfam" id="NF001109">
    <property type="entry name" value="PRK00136.1"/>
    <property type="match status" value="1"/>
</dbReference>
<dbReference type="PANTHER" id="PTHR11758">
    <property type="entry name" value="40S RIBOSOMAL PROTEIN S15A"/>
    <property type="match status" value="1"/>
</dbReference>
<dbReference type="Pfam" id="PF00410">
    <property type="entry name" value="Ribosomal_S8"/>
    <property type="match status" value="1"/>
</dbReference>
<dbReference type="SUPFAM" id="SSF56047">
    <property type="entry name" value="Ribosomal protein S8"/>
    <property type="match status" value="1"/>
</dbReference>
<dbReference type="PROSITE" id="PS00053">
    <property type="entry name" value="RIBOSOMAL_S8"/>
    <property type="match status" value="1"/>
</dbReference>
<evidence type="ECO:0000255" key="1">
    <source>
        <dbReference type="HAMAP-Rule" id="MF_01302"/>
    </source>
</evidence>
<evidence type="ECO:0000305" key="2"/>
<comment type="function">
    <text evidence="1">One of the primary rRNA binding proteins, it binds directly to 16S rRNA central domain where it helps coordinate assembly of the platform of the 30S subunit.</text>
</comment>
<comment type="subunit">
    <text evidence="1">Part of the 30S ribosomal subunit. Contacts proteins S5 and S12.</text>
</comment>
<comment type="similarity">
    <text evidence="1">Belongs to the universal ribosomal protein uS8 family.</text>
</comment>
<accession>Q02W39</accession>
<sequence>MVMTDPIADFLTRIRNGNMRKFDVVEAPASKIKRQIAEILKAEGYVKDVEYVEDNKQGVIRVFLKYGKNGEKVITNLKRISKPGLRVYVKSDDVPKVLNGLGTAIISTSTGVVTDKVARQTNVGGEVIAYIW</sequence>
<name>RS8_LACLS</name>
<keyword id="KW-0687">Ribonucleoprotein</keyword>
<keyword id="KW-0689">Ribosomal protein</keyword>
<keyword id="KW-0694">RNA-binding</keyword>
<keyword id="KW-0699">rRNA-binding</keyword>